<sequence>MPINIRRATINDIICMQNANLHNLPENYMMKYYMYHILSWPEASFVATTTTLDCEDSDEQDENDKLELTLDGTNDGRTIKLDPTYLAPGEKLVGYVLVKMNDDPDQQNEPPNGHITSLSVMRTYRRMGIAENLMRQALFALREVHQAEYVSLHVRQSNRAALHLYRDTLAFEVLSIEKSYYQDGEDAYAMKKVLKLEELQISNFTHRRLKENEEKLEDDLESDLLEDIIKQGVNDIIV</sequence>
<dbReference type="EC" id="2.3.1.255" evidence="5 6"/>
<dbReference type="EMBL" id="M11621">
    <property type="protein sequence ID" value="AAA66323.1"/>
    <property type="molecule type" value="Genomic_DNA"/>
</dbReference>
<dbReference type="EMBL" id="U10400">
    <property type="protein sequence ID" value="AAB68937.1"/>
    <property type="molecule type" value="Genomic_DNA"/>
</dbReference>
<dbReference type="EMBL" id="AY557822">
    <property type="protein sequence ID" value="AAS56148.1"/>
    <property type="molecule type" value="Genomic_DNA"/>
</dbReference>
<dbReference type="EMBL" id="BK006934">
    <property type="protein sequence ID" value="DAA06702.1"/>
    <property type="molecule type" value="Genomic_DNA"/>
</dbReference>
<dbReference type="PIR" id="S46783">
    <property type="entry name" value="TWBYA1"/>
</dbReference>
<dbReference type="RefSeq" id="NP_011877.1">
    <property type="nucleotide sequence ID" value="NM_001179143.1"/>
</dbReference>
<dbReference type="PDB" id="4HNW">
    <property type="method" value="X-ray"/>
    <property type="resolution" value="2.80 A"/>
    <property type="chains" value="B=1-238"/>
</dbReference>
<dbReference type="PDB" id="4HNX">
    <property type="method" value="X-ray"/>
    <property type="resolution" value="2.34 A"/>
    <property type="chains" value="B=1-238"/>
</dbReference>
<dbReference type="PDB" id="4HNY">
    <property type="method" value="X-ray"/>
    <property type="resolution" value="2.25 A"/>
    <property type="chains" value="B/D=1-238"/>
</dbReference>
<dbReference type="PDB" id="4XNH">
    <property type="method" value="X-ray"/>
    <property type="resolution" value="2.10 A"/>
    <property type="chains" value="B=1-238"/>
</dbReference>
<dbReference type="PDB" id="4XPD">
    <property type="method" value="X-ray"/>
    <property type="resolution" value="2.81 A"/>
    <property type="chains" value="B=1-238"/>
</dbReference>
<dbReference type="PDB" id="4Y49">
    <property type="method" value="X-ray"/>
    <property type="resolution" value="3.95 A"/>
    <property type="chains" value="B/H/N=1-238"/>
</dbReference>
<dbReference type="PDB" id="6HD5">
    <property type="method" value="EM"/>
    <property type="resolution" value="4.80 A"/>
    <property type="chains" value="u=1-238"/>
</dbReference>
<dbReference type="PDB" id="6HD7">
    <property type="method" value="EM"/>
    <property type="resolution" value="3.40 A"/>
    <property type="chains" value="u=1-238"/>
</dbReference>
<dbReference type="PDB" id="6O07">
    <property type="method" value="X-ray"/>
    <property type="resolution" value="2.70 A"/>
    <property type="chains" value="B=1-238"/>
</dbReference>
<dbReference type="PDBsum" id="4HNW"/>
<dbReference type="PDBsum" id="4HNX"/>
<dbReference type="PDBsum" id="4HNY"/>
<dbReference type="PDBsum" id="4XNH"/>
<dbReference type="PDBsum" id="4XPD"/>
<dbReference type="PDBsum" id="4Y49"/>
<dbReference type="PDBsum" id="6HD5"/>
<dbReference type="PDBsum" id="6HD7"/>
<dbReference type="PDBsum" id="6O07"/>
<dbReference type="EMDB" id="EMD-0201"/>
<dbReference type="EMDB" id="EMD-0202"/>
<dbReference type="SMR" id="P07347"/>
<dbReference type="BioGRID" id="36440">
    <property type="interactions" value="381"/>
</dbReference>
<dbReference type="ComplexPortal" id="CPX-783">
    <property type="entry name" value="NatA N-alpha-acetyltransferase complex"/>
</dbReference>
<dbReference type="DIP" id="DIP-6788N"/>
<dbReference type="FunCoup" id="P07347">
    <property type="interactions" value="941"/>
</dbReference>
<dbReference type="IntAct" id="P07347">
    <property type="interactions" value="63"/>
</dbReference>
<dbReference type="MINT" id="P07347"/>
<dbReference type="STRING" id="4932.YHR013C"/>
<dbReference type="iPTMnet" id="P07347"/>
<dbReference type="PaxDb" id="4932-YHR013C"/>
<dbReference type="PeptideAtlas" id="P07347"/>
<dbReference type="EnsemblFungi" id="YHR013C_mRNA">
    <property type="protein sequence ID" value="YHR013C"/>
    <property type="gene ID" value="YHR013C"/>
</dbReference>
<dbReference type="GeneID" id="856404"/>
<dbReference type="KEGG" id="sce:YHR013C"/>
<dbReference type="AGR" id="SGD:S000001055"/>
<dbReference type="SGD" id="S000001055">
    <property type="gene designation" value="ARD1"/>
</dbReference>
<dbReference type="VEuPathDB" id="FungiDB:YHR013C"/>
<dbReference type="eggNOG" id="KOG3235">
    <property type="taxonomic scope" value="Eukaryota"/>
</dbReference>
<dbReference type="GeneTree" id="ENSGT00940000174781"/>
<dbReference type="HOGENOM" id="CLU_013985_7_2_1"/>
<dbReference type="InParanoid" id="P07347"/>
<dbReference type="OMA" id="MSMQNAN"/>
<dbReference type="OrthoDB" id="25586at2759"/>
<dbReference type="BioCyc" id="YEAST:YHR013C-MONOMER"/>
<dbReference type="BRENDA" id="2.3.1.255">
    <property type="organism ID" value="984"/>
</dbReference>
<dbReference type="BRENDA" id="2.3.1.258">
    <property type="organism ID" value="984"/>
</dbReference>
<dbReference type="BioGRID-ORCS" id="856404">
    <property type="hits" value="1 hit in 10 CRISPR screens"/>
</dbReference>
<dbReference type="EvolutionaryTrace" id="P07347"/>
<dbReference type="PRO" id="PR:P07347"/>
<dbReference type="Proteomes" id="UP000002311">
    <property type="component" value="Chromosome VIII"/>
</dbReference>
<dbReference type="RNAct" id="P07347">
    <property type="molecule type" value="protein"/>
</dbReference>
<dbReference type="GO" id="GO:0031415">
    <property type="term" value="C:NatA complex"/>
    <property type="evidence" value="ECO:0000314"/>
    <property type="project" value="SGD"/>
</dbReference>
<dbReference type="GO" id="GO:0042802">
    <property type="term" value="F:identical protein binding"/>
    <property type="evidence" value="ECO:0000353"/>
    <property type="project" value="IntAct"/>
</dbReference>
<dbReference type="GO" id="GO:1990189">
    <property type="term" value="F:protein N-terminal-serine acetyltransferase activity"/>
    <property type="evidence" value="ECO:0000318"/>
    <property type="project" value="GO_Central"/>
</dbReference>
<dbReference type="GO" id="GO:0008999">
    <property type="term" value="F:protein-N-terminal-alanine acetyltransferase activity"/>
    <property type="evidence" value="ECO:0007669"/>
    <property type="project" value="RHEA"/>
</dbReference>
<dbReference type="GO" id="GO:1990190">
    <property type="term" value="F:protein-N-terminal-glutamate acetyltransferase activity"/>
    <property type="evidence" value="ECO:0000318"/>
    <property type="project" value="GO_Central"/>
</dbReference>
<dbReference type="CDD" id="cd04301">
    <property type="entry name" value="NAT_SF"/>
    <property type="match status" value="1"/>
</dbReference>
<dbReference type="FunFam" id="3.40.630.30:FF:000107">
    <property type="entry name" value="N-terminal acetyltransferase complex ARD1 subunit"/>
    <property type="match status" value="1"/>
</dbReference>
<dbReference type="Gene3D" id="3.40.630.30">
    <property type="match status" value="1"/>
</dbReference>
<dbReference type="InterPro" id="IPR016181">
    <property type="entry name" value="Acyl_CoA_acyltransferase"/>
</dbReference>
<dbReference type="InterPro" id="IPR045047">
    <property type="entry name" value="Ard1-like"/>
</dbReference>
<dbReference type="InterPro" id="IPR000182">
    <property type="entry name" value="GNAT_dom"/>
</dbReference>
<dbReference type="PANTHER" id="PTHR23091">
    <property type="entry name" value="N-TERMINAL ACETYLTRANSFERASE"/>
    <property type="match status" value="1"/>
</dbReference>
<dbReference type="PANTHER" id="PTHR23091:SF4">
    <property type="entry name" value="N-TERMINAL AMINO-ACID N(ALPHA)-ACETYLTRANSFERASE NATA"/>
    <property type="match status" value="1"/>
</dbReference>
<dbReference type="Pfam" id="PF00583">
    <property type="entry name" value="Acetyltransf_1"/>
    <property type="match status" value="1"/>
</dbReference>
<dbReference type="SUPFAM" id="SSF55729">
    <property type="entry name" value="Acyl-CoA N-acyltransferases (Nat)"/>
    <property type="match status" value="1"/>
</dbReference>
<dbReference type="PROSITE" id="PS51186">
    <property type="entry name" value="GNAT"/>
    <property type="match status" value="1"/>
</dbReference>
<feature type="chain" id="PRO_0000074529" description="N-terminal acetyltransferase A complex catalytic subunit ARD1">
    <location>
        <begin position="1"/>
        <end position="238"/>
    </location>
</feature>
<feature type="domain" description="N-acetyltransferase" evidence="1">
    <location>
        <begin position="35"/>
        <end position="195"/>
    </location>
</feature>
<feature type="sequence conflict" description="In Ref. 1; AAA66323." evidence="7" ref="1">
    <original>I</original>
    <variation>T</variation>
    <location>
        <position position="37"/>
    </location>
</feature>
<feature type="strand" evidence="11">
    <location>
        <begin position="3"/>
        <end position="7"/>
    </location>
</feature>
<feature type="helix" evidence="11">
    <location>
        <begin position="10"/>
        <end position="12"/>
    </location>
</feature>
<feature type="helix" evidence="11">
    <location>
        <begin position="13"/>
        <end position="23"/>
    </location>
</feature>
<feature type="helix" evidence="10">
    <location>
        <begin position="27"/>
        <end position="29"/>
    </location>
</feature>
<feature type="helix" evidence="11">
    <location>
        <begin position="30"/>
        <end position="39"/>
    </location>
</feature>
<feature type="turn" evidence="11">
    <location>
        <begin position="41"/>
        <end position="43"/>
    </location>
</feature>
<feature type="strand" evidence="11">
    <location>
        <begin position="45"/>
        <end position="49"/>
    </location>
</feature>
<feature type="helix" evidence="10">
    <location>
        <begin position="66"/>
        <end position="69"/>
    </location>
</feature>
<feature type="turn" evidence="10">
    <location>
        <begin position="70"/>
        <end position="72"/>
    </location>
</feature>
<feature type="strand" evidence="11">
    <location>
        <begin position="85"/>
        <end position="87"/>
    </location>
</feature>
<feature type="strand" evidence="11">
    <location>
        <begin position="90"/>
        <end position="100"/>
    </location>
</feature>
<feature type="helix" evidence="9">
    <location>
        <begin position="104"/>
        <end position="106"/>
    </location>
</feature>
<feature type="strand" evidence="8">
    <location>
        <begin position="107"/>
        <end position="109"/>
    </location>
</feature>
<feature type="strand" evidence="11">
    <location>
        <begin position="112"/>
        <end position="120"/>
    </location>
</feature>
<feature type="helix" evidence="11">
    <location>
        <begin position="122"/>
        <end position="124"/>
    </location>
</feature>
<feature type="strand" evidence="11">
    <location>
        <begin position="126"/>
        <end position="128"/>
    </location>
</feature>
<feature type="helix" evidence="11">
    <location>
        <begin position="129"/>
        <end position="145"/>
    </location>
</feature>
<feature type="strand" evidence="11">
    <location>
        <begin position="148"/>
        <end position="155"/>
    </location>
</feature>
<feature type="helix" evidence="11">
    <location>
        <begin position="159"/>
        <end position="166"/>
    </location>
</feature>
<feature type="turn" evidence="11">
    <location>
        <begin position="167"/>
        <end position="169"/>
    </location>
</feature>
<feature type="strand" evidence="11">
    <location>
        <begin position="172"/>
        <end position="177"/>
    </location>
</feature>
<feature type="strand" evidence="11">
    <location>
        <begin position="187"/>
        <end position="193"/>
    </location>
</feature>
<feature type="helix" evidence="11">
    <location>
        <begin position="196"/>
        <end position="199"/>
    </location>
</feature>
<feature type="helix" evidence="11">
    <location>
        <begin position="201"/>
        <end position="204"/>
    </location>
</feature>
<feature type="turn" evidence="10">
    <location>
        <begin position="205"/>
        <end position="208"/>
    </location>
</feature>
<feature type="strand" evidence="10">
    <location>
        <begin position="220"/>
        <end position="222"/>
    </location>
</feature>
<feature type="helix" evidence="10">
    <location>
        <begin position="224"/>
        <end position="233"/>
    </location>
</feature>
<proteinExistence type="evidence at protein level"/>
<organism>
    <name type="scientific">Saccharomyces cerevisiae (strain ATCC 204508 / S288c)</name>
    <name type="common">Baker's yeast</name>
    <dbReference type="NCBI Taxonomy" id="559292"/>
    <lineage>
        <taxon>Eukaryota</taxon>
        <taxon>Fungi</taxon>
        <taxon>Dikarya</taxon>
        <taxon>Ascomycota</taxon>
        <taxon>Saccharomycotina</taxon>
        <taxon>Saccharomycetes</taxon>
        <taxon>Saccharomycetales</taxon>
        <taxon>Saccharomycetaceae</taxon>
        <taxon>Saccharomyces</taxon>
    </lineage>
</organism>
<gene>
    <name type="primary">ARD1</name>
    <name type="ordered locus">YHR013C</name>
</gene>
<keyword id="KW-0002">3D-structure</keyword>
<keyword id="KW-0012">Acyltransferase</keyword>
<keyword id="KW-0963">Cytoplasm</keyword>
<keyword id="KW-1185">Reference proteome</keyword>
<keyword id="KW-0808">Transferase</keyword>
<protein>
    <recommendedName>
        <fullName>N-terminal acetyltransferase A complex catalytic subunit ARD1</fullName>
        <shortName>NatA complex subunit ARD1</shortName>
        <ecNumber evidence="5 6">2.3.1.255</ecNumber>
    </recommendedName>
    <alternativeName>
        <fullName>Arrest-defective protein 1</fullName>
    </alternativeName>
</protein>
<evidence type="ECO:0000255" key="1">
    <source>
        <dbReference type="PROSITE-ProRule" id="PRU00532"/>
    </source>
</evidence>
<evidence type="ECO:0000269" key="2">
    <source>
    </source>
</evidence>
<evidence type="ECO:0000269" key="3">
    <source>
    </source>
</evidence>
<evidence type="ECO:0000269" key="4">
    <source>
    </source>
</evidence>
<evidence type="ECO:0000269" key="5">
    <source>
    </source>
</evidence>
<evidence type="ECO:0000269" key="6">
    <source>
    </source>
</evidence>
<evidence type="ECO:0000305" key="7"/>
<evidence type="ECO:0007829" key="8">
    <source>
        <dbReference type="PDB" id="4HNW"/>
    </source>
</evidence>
<evidence type="ECO:0007829" key="9">
    <source>
        <dbReference type="PDB" id="4HNX"/>
    </source>
</evidence>
<evidence type="ECO:0007829" key="10">
    <source>
        <dbReference type="PDB" id="4HNY"/>
    </source>
</evidence>
<evidence type="ECO:0007829" key="11">
    <source>
        <dbReference type="PDB" id="4XNH"/>
    </source>
</evidence>
<reference key="1">
    <citation type="journal article" date="1985" name="Cell">
        <title>The ARD1 gene of yeast functions in the switch between the mitotic cell cycle and alternative developmental pathways.</title>
        <authorList>
            <person name="Whiteway M."/>
            <person name="Szostak J.W."/>
        </authorList>
    </citation>
    <scope>NUCLEOTIDE SEQUENCE [GENOMIC DNA]</scope>
</reference>
<reference key="2">
    <citation type="journal article" date="1994" name="Science">
        <title>Complete nucleotide sequence of Saccharomyces cerevisiae chromosome VIII.</title>
        <authorList>
            <person name="Johnston M."/>
            <person name="Andrews S."/>
            <person name="Brinkman R."/>
            <person name="Cooper J."/>
            <person name="Ding H."/>
            <person name="Dover J."/>
            <person name="Du Z."/>
            <person name="Favello A."/>
            <person name="Fulton L."/>
            <person name="Gattung S."/>
            <person name="Geisel C."/>
            <person name="Kirsten J."/>
            <person name="Kucaba T."/>
            <person name="Hillier L.W."/>
            <person name="Jier M."/>
            <person name="Johnston L."/>
            <person name="Langston Y."/>
            <person name="Latreille P."/>
            <person name="Louis E.J."/>
            <person name="Macri C."/>
            <person name="Mardis E."/>
            <person name="Menezes S."/>
            <person name="Mouser L."/>
            <person name="Nhan M."/>
            <person name="Rifkin L."/>
            <person name="Riles L."/>
            <person name="St Peter H."/>
            <person name="Trevaskis E."/>
            <person name="Vaughan K."/>
            <person name="Vignati D."/>
            <person name="Wilcox L."/>
            <person name="Wohldman P."/>
            <person name="Waterston R."/>
            <person name="Wilson R."/>
            <person name="Vaudin M."/>
        </authorList>
    </citation>
    <scope>NUCLEOTIDE SEQUENCE [LARGE SCALE GENOMIC DNA]</scope>
    <source>
        <strain>ATCC 204508 / S288c</strain>
    </source>
</reference>
<reference key="3">
    <citation type="journal article" date="2014" name="G3 (Bethesda)">
        <title>The reference genome sequence of Saccharomyces cerevisiae: Then and now.</title>
        <authorList>
            <person name="Engel S.R."/>
            <person name="Dietrich F.S."/>
            <person name="Fisk D.G."/>
            <person name="Binkley G."/>
            <person name="Balakrishnan R."/>
            <person name="Costanzo M.C."/>
            <person name="Dwight S.S."/>
            <person name="Hitz B.C."/>
            <person name="Karra K."/>
            <person name="Nash R.S."/>
            <person name="Weng S."/>
            <person name="Wong E.D."/>
            <person name="Lloyd P."/>
            <person name="Skrzypek M.S."/>
            <person name="Miyasato S.R."/>
            <person name="Simison M."/>
            <person name="Cherry J.M."/>
        </authorList>
    </citation>
    <scope>GENOME REANNOTATION</scope>
    <source>
        <strain>ATCC 204508 / S288c</strain>
    </source>
</reference>
<reference key="4">
    <citation type="journal article" date="2007" name="Genome Res.">
        <title>Approaching a complete repository of sequence-verified protein-encoding clones for Saccharomyces cerevisiae.</title>
        <authorList>
            <person name="Hu Y."/>
            <person name="Rolfs A."/>
            <person name="Bhullar B."/>
            <person name="Murthy T.V.S."/>
            <person name="Zhu C."/>
            <person name="Berger M.F."/>
            <person name="Camargo A.A."/>
            <person name="Kelley F."/>
            <person name="McCarron S."/>
            <person name="Jepson D."/>
            <person name="Richardson A."/>
            <person name="Raphael J."/>
            <person name="Moreira D."/>
            <person name="Taycher E."/>
            <person name="Zuo D."/>
            <person name="Mohr S."/>
            <person name="Kane M.F."/>
            <person name="Williamson J."/>
            <person name="Simpson A.J.G."/>
            <person name="Bulyk M.L."/>
            <person name="Harlow E."/>
            <person name="Marsischky G."/>
            <person name="Kolodner R.D."/>
            <person name="LaBaer J."/>
        </authorList>
    </citation>
    <scope>NUCLEOTIDE SEQUENCE [GENOMIC DNA]</scope>
    <source>
        <strain>ATCC 204508 / S288c</strain>
    </source>
</reference>
<reference key="5">
    <citation type="journal article" date="1989" name="EMBO J.">
        <title>Identification and characterization of genes and mutants for an N-terminal acetyltransferase from yeast.</title>
        <authorList>
            <person name="Mullen J.R."/>
            <person name="Kayne P.S."/>
            <person name="Moerschell R.P."/>
            <person name="Tsunasawa S."/>
            <person name="Gribskov M."/>
            <person name="Colavito-Shepanski M."/>
            <person name="Grunstein M."/>
            <person name="Sherman F."/>
            <person name="Sternglanz R."/>
        </authorList>
    </citation>
    <scope>FUNCTION</scope>
    <scope>CATALYTIC ACTIVITY</scope>
    <scope>CHARACTERIZATION</scope>
</reference>
<reference key="6">
    <citation type="journal article" date="1992" name="EMBO J.">
        <title>ARD1 and NAT1 proteins form a complex that has N-terminal acetyltransferase activity.</title>
        <authorList>
            <person name="Park E.C."/>
            <person name="Szostak J.W."/>
        </authorList>
    </citation>
    <scope>FUNCTION</scope>
    <scope>CATALYTIC ACTIVITY</scope>
    <scope>INTERACTION WITH NAT1</scope>
    <scope>SELF-ASSOCIATION</scope>
</reference>
<reference key="7">
    <citation type="journal article" date="2003" name="Mol. Cell. Biol.">
        <title>The yeast N(alpha)-acetyltransferase NatA is quantitatively anchored to the ribosome and interacts with nascent polypeptides.</title>
        <authorList>
            <person name="Gautschi M."/>
            <person name="Just S."/>
            <person name="Mun A."/>
            <person name="Ross S."/>
            <person name="Rucknagel P."/>
            <person name="Dubaquie Y."/>
            <person name="Ehrenhofer-Murray A."/>
            <person name="Rospert S."/>
        </authorList>
    </citation>
    <scope>IDENTIFICATION IN THE NATA COMPLEX</scope>
</reference>
<reference key="8">
    <citation type="journal article" date="2003" name="Nature">
        <title>Global analysis of protein localization in budding yeast.</title>
        <authorList>
            <person name="Huh W.-K."/>
            <person name="Falvo J.V."/>
            <person name="Gerke L.C."/>
            <person name="Carroll A.S."/>
            <person name="Howson R.W."/>
            <person name="Weissman J.S."/>
            <person name="O'Shea E.K."/>
        </authorList>
    </citation>
    <scope>SUBCELLULAR LOCATION [LARGE SCALE ANALYSIS]</scope>
</reference>
<reference key="9">
    <citation type="journal article" date="2003" name="Nature">
        <title>Global analysis of protein expression in yeast.</title>
        <authorList>
            <person name="Ghaemmaghami S."/>
            <person name="Huh W.-K."/>
            <person name="Bower K."/>
            <person name="Howson R.W."/>
            <person name="Belle A."/>
            <person name="Dephoure N."/>
            <person name="O'Shea E.K."/>
            <person name="Weissman J.S."/>
        </authorList>
    </citation>
    <scope>LEVEL OF PROTEIN EXPRESSION [LARGE SCALE ANALYSIS]</scope>
</reference>
<comment type="function">
    <text evidence="5 6">Catalytic component of the NatA N-terminal acetyltransferase, which catalyzes acetylation of proteins beginning with Met-Ser, Met-Gly and Met-Ala. N-acetylation plays a role in normal eukaryotic translation and processing, protect against proteolytic degradation and protein turnover.</text>
</comment>
<comment type="catalytic activity">
    <reaction evidence="5 6">
        <text>N-terminal glycyl-[protein] + acetyl-CoA = N-terminal N(alpha)-acetylglycyl-[protein] + CoA + H(+)</text>
        <dbReference type="Rhea" id="RHEA:50496"/>
        <dbReference type="Rhea" id="RHEA-COMP:12666"/>
        <dbReference type="Rhea" id="RHEA-COMP:12700"/>
        <dbReference type="ChEBI" id="CHEBI:15378"/>
        <dbReference type="ChEBI" id="CHEBI:57287"/>
        <dbReference type="ChEBI" id="CHEBI:57288"/>
        <dbReference type="ChEBI" id="CHEBI:64723"/>
        <dbReference type="ChEBI" id="CHEBI:133369"/>
        <dbReference type="EC" id="2.3.1.255"/>
    </reaction>
</comment>
<comment type="catalytic activity">
    <reaction evidence="5 6">
        <text>N-terminal L-alanyl-[protein] + acetyl-CoA = N-terminal N(alpha)-acetyl-L-alanyl-[protein] + CoA + H(+)</text>
        <dbReference type="Rhea" id="RHEA:50500"/>
        <dbReference type="Rhea" id="RHEA-COMP:12701"/>
        <dbReference type="Rhea" id="RHEA-COMP:12702"/>
        <dbReference type="ChEBI" id="CHEBI:15378"/>
        <dbReference type="ChEBI" id="CHEBI:57287"/>
        <dbReference type="ChEBI" id="CHEBI:57288"/>
        <dbReference type="ChEBI" id="CHEBI:64718"/>
        <dbReference type="ChEBI" id="CHEBI:83683"/>
        <dbReference type="EC" id="2.3.1.255"/>
    </reaction>
</comment>
<comment type="catalytic activity">
    <reaction evidence="5 6">
        <text>N-terminal L-seryl-[protein] + acetyl-CoA = N-terminal N(alpha)-acetyl-L-seryl-[protein] + CoA + H(+)</text>
        <dbReference type="Rhea" id="RHEA:50504"/>
        <dbReference type="Rhea" id="RHEA-COMP:12703"/>
        <dbReference type="Rhea" id="RHEA-COMP:12704"/>
        <dbReference type="ChEBI" id="CHEBI:15378"/>
        <dbReference type="ChEBI" id="CHEBI:57287"/>
        <dbReference type="ChEBI" id="CHEBI:57288"/>
        <dbReference type="ChEBI" id="CHEBI:64738"/>
        <dbReference type="ChEBI" id="CHEBI:83690"/>
        <dbReference type="EC" id="2.3.1.255"/>
    </reaction>
</comment>
<comment type="catalytic activity">
    <reaction evidence="5 6">
        <text>N-terminal L-valyl-[protein] + acetyl-CoA = N-terminal N(alpha)-acetyl-L-valyl-[protein] + CoA + H(+)</text>
        <dbReference type="Rhea" id="RHEA:50508"/>
        <dbReference type="Rhea" id="RHEA-COMP:12705"/>
        <dbReference type="Rhea" id="RHEA-COMP:12706"/>
        <dbReference type="ChEBI" id="CHEBI:15378"/>
        <dbReference type="ChEBI" id="CHEBI:57287"/>
        <dbReference type="ChEBI" id="CHEBI:57288"/>
        <dbReference type="ChEBI" id="CHEBI:64741"/>
        <dbReference type="ChEBI" id="CHEBI:133371"/>
        <dbReference type="EC" id="2.3.1.255"/>
    </reaction>
</comment>
<comment type="catalytic activity">
    <reaction evidence="5 6">
        <text>N-terminal L-cysteinyl-[protein] + acetyl-CoA = N-terminal N(alpha)-acetyl-L-cysteinyl-[protein] + CoA + H(+)</text>
        <dbReference type="Rhea" id="RHEA:50512"/>
        <dbReference type="Rhea" id="RHEA-COMP:12707"/>
        <dbReference type="Rhea" id="RHEA-COMP:12708"/>
        <dbReference type="ChEBI" id="CHEBI:15378"/>
        <dbReference type="ChEBI" id="CHEBI:57287"/>
        <dbReference type="ChEBI" id="CHEBI:57288"/>
        <dbReference type="ChEBI" id="CHEBI:65250"/>
        <dbReference type="ChEBI" id="CHEBI:133372"/>
        <dbReference type="EC" id="2.3.1.255"/>
    </reaction>
</comment>
<comment type="catalytic activity">
    <reaction evidence="5 6">
        <text>N-terminal L-threonyl-[protein] + acetyl-CoA = N-terminal N(alpha)-acetyl-L-threonyl-[protein] + CoA + H(+)</text>
        <dbReference type="Rhea" id="RHEA:50516"/>
        <dbReference type="Rhea" id="RHEA-COMP:12709"/>
        <dbReference type="Rhea" id="RHEA-COMP:12710"/>
        <dbReference type="ChEBI" id="CHEBI:15378"/>
        <dbReference type="ChEBI" id="CHEBI:57287"/>
        <dbReference type="ChEBI" id="CHEBI:57288"/>
        <dbReference type="ChEBI" id="CHEBI:64739"/>
        <dbReference type="ChEBI" id="CHEBI:133375"/>
        <dbReference type="EC" id="2.3.1.255"/>
    </reaction>
</comment>
<comment type="subunit">
    <text evidence="2">Component of the N-terminal acetyltransferase A (NatA) complex, which is composed of ARD1, NAT1 and NAT5. Can self-associate.</text>
</comment>
<comment type="interaction">
    <interactant intactId="EBI-2796">
        <id>P07347</id>
    </interactant>
    <interactant intactId="EBI-2796">
        <id>P07347</id>
        <label>ARD1</label>
    </interactant>
    <organismsDiffer>false</organismsDiffer>
    <experiments>2</experiments>
</comment>
<comment type="interaction">
    <interactant intactId="EBI-2796">
        <id>P07347</id>
    </interactant>
    <interactant intactId="EBI-11868">
        <id>P12945</id>
        <label>NAT1</label>
    </interactant>
    <organismsDiffer>false</organismsDiffer>
    <experiments>11</experiments>
</comment>
<comment type="subcellular location">
    <subcellularLocation>
        <location evidence="3">Cytoplasm</location>
    </subcellularLocation>
</comment>
<comment type="miscellaneous">
    <text evidence="4">Present with 3310 molecules/cell in log phase SD medium.</text>
</comment>
<comment type="similarity">
    <text evidence="7">Belongs to the acetyltransferase family. ARD1 subfamily.</text>
</comment>
<name>ARD1_YEAST</name>
<accession>P07347</accession>
<accession>D3DKV8</accession>